<keyword id="KW-0472">Membrane</keyword>
<keyword id="KW-0496">Mitochondrion</keyword>
<keyword id="KW-0999">Mitochondrion inner membrane</keyword>
<keyword id="KW-1185">Reference proteome</keyword>
<keyword id="KW-0809">Transit peptide</keyword>
<keyword id="KW-0812">Transmembrane</keyword>
<keyword id="KW-1133">Transmembrane helix</keyword>
<comment type="function">
    <text evidence="2">Component of the cytochrome c oxidase, the last enzyme in the mitochondrial electron transport chain which drives oxidative phosphorylation. The respiratory chain contains 3 multisubunit complexes succinate dehydrogenase (complex II, CII), ubiquinol-cytochrome c oxidoreductase (cytochrome b-c1 complex, complex III, CIII) and cytochrome c oxidase (complex IV, CIV), that cooperate to transfer electrons derived from NADH and succinate to molecular oxygen, creating an electrochemical gradient over the inner membrane that drives transmembrane transport and the ATP synthase. Cytochrome c oxidase is the component of the respiratory chain that catalyzes the reduction of oxygen to water. Electrons originating from reduced cytochrome c in the intermembrane space (IMS) are transferred via the dinuclear copper A center (CU(A)) of subunit 2 and heme A of subunit 1 to the active site in subunit 1, a binuclear center (BNC) formed by heme A3 and copper B (CU(B)). The BNC reduces molecular oxygen to 2 water molecules using 4 electrons from cytochrome c in the IMS and 4 protons from the mitochondrial matrix.</text>
</comment>
<comment type="pathway">
    <text evidence="2">Energy metabolism; oxidative phosphorylation.</text>
</comment>
<comment type="subunit">
    <text evidence="1">Component of the cytochrome c oxidase (complex IV, CIV), a multisubunit enzyme composed of 14 subunits. The complex is composed of a catalytic core of 3 subunits MT-CO1, MT-CO2 and MT-CO3, encoded in the mitochondrial DNA, and 11 supernumerary subunits COX4I, COX5A, COX5B, COX6A, COX6B, COX6C, COX7A, COX7B, COX7C, COX8 and NDUFA4, which are encoded in the nuclear genome. The complex exists as a monomer or a dimer and forms supercomplexes (SCs) in the inner mitochondrial membrane with NADH-ubiquinone oxidoreductase (complex I, CI) and ubiquinol-cytochrome c oxidoreductase (cytochrome b-c1 complex, complex III, CIII), resulting in different assemblies (supercomplex SCI(1)III(2)IV(1) and megacomplex MCI(2)III(2)IV(2)).</text>
</comment>
<comment type="subcellular location">
    <subcellularLocation>
        <location evidence="1">Mitochondrion inner membrane</location>
        <topology evidence="1">Single-pass membrane protein</topology>
    </subcellularLocation>
</comment>
<comment type="tissue specificity">
    <text>Highly expressed in lung.</text>
</comment>
<comment type="similarity">
    <text evidence="5">Belongs to the cytochrome c oxidase IV family.</text>
</comment>
<protein>
    <recommendedName>
        <fullName>Cytochrome c oxidase subunit 4 isoform 2, mitochondrial</fullName>
    </recommendedName>
    <alternativeName>
        <fullName>Cytochrome c oxidase subunit IV isoform 2</fullName>
        <shortName>COX IV-2</shortName>
    </alternativeName>
</protein>
<gene>
    <name type="primary">Cox4i2</name>
    <name type="synonym">Cox4b</name>
</gene>
<proteinExistence type="evidence at transcript level"/>
<name>COX42_RAT</name>
<accession>Q91Y94</accession>
<dbReference type="EMBL" id="AF255347">
    <property type="protein sequence ID" value="AAK49191.1"/>
    <property type="molecule type" value="mRNA"/>
</dbReference>
<dbReference type="RefSeq" id="NP_445924.1">
    <property type="nucleotide sequence ID" value="NM_053472.1"/>
</dbReference>
<dbReference type="RefSeq" id="XP_006235342.1">
    <property type="nucleotide sequence ID" value="XM_006235280.4"/>
</dbReference>
<dbReference type="RefSeq" id="XP_017447569.1">
    <property type="nucleotide sequence ID" value="XM_017592080.1"/>
</dbReference>
<dbReference type="RefSeq" id="XP_038961922.1">
    <property type="nucleotide sequence ID" value="XM_039105994.2"/>
</dbReference>
<dbReference type="RefSeq" id="XP_063140800.1">
    <property type="nucleotide sequence ID" value="XM_063284730.1"/>
</dbReference>
<dbReference type="RefSeq" id="XP_063140801.1">
    <property type="nucleotide sequence ID" value="XM_063284731.1"/>
</dbReference>
<dbReference type="SMR" id="Q91Y94"/>
<dbReference type="FunCoup" id="Q91Y94">
    <property type="interactions" value="131"/>
</dbReference>
<dbReference type="STRING" id="10116.ENSRNOP00000010418"/>
<dbReference type="iPTMnet" id="Q91Y94"/>
<dbReference type="PhosphoSitePlus" id="Q91Y94"/>
<dbReference type="jPOST" id="Q91Y94"/>
<dbReference type="PaxDb" id="10116-ENSRNOP00000010418"/>
<dbReference type="GeneID" id="84683"/>
<dbReference type="KEGG" id="rno:84683"/>
<dbReference type="UCSC" id="RGD:69422">
    <property type="organism name" value="rat"/>
</dbReference>
<dbReference type="AGR" id="RGD:69422"/>
<dbReference type="CTD" id="84701"/>
<dbReference type="RGD" id="69422">
    <property type="gene designation" value="Cox4i2"/>
</dbReference>
<dbReference type="VEuPathDB" id="HostDB:ENSRNOG00000007827"/>
<dbReference type="eggNOG" id="KOG4075">
    <property type="taxonomic scope" value="Eukaryota"/>
</dbReference>
<dbReference type="HOGENOM" id="CLU_117340_1_1_1"/>
<dbReference type="InParanoid" id="Q91Y94"/>
<dbReference type="OrthoDB" id="186013at2759"/>
<dbReference type="PhylomeDB" id="Q91Y94"/>
<dbReference type="TreeFam" id="TF105061"/>
<dbReference type="Reactome" id="R-RNO-5628897">
    <property type="pathway name" value="TP53 Regulates Metabolic Genes"/>
</dbReference>
<dbReference type="Reactome" id="R-RNO-611105">
    <property type="pathway name" value="Respiratory electron transport"/>
</dbReference>
<dbReference type="Reactome" id="R-RNO-9707564">
    <property type="pathway name" value="Cytoprotection by HMOX1"/>
</dbReference>
<dbReference type="Reactome" id="R-RNO-9864848">
    <property type="pathway name" value="Complex IV assembly"/>
</dbReference>
<dbReference type="UniPathway" id="UPA00705"/>
<dbReference type="PRO" id="PR:Q91Y94"/>
<dbReference type="Proteomes" id="UP000002494">
    <property type="component" value="Chromosome 3"/>
</dbReference>
<dbReference type="Bgee" id="ENSRNOG00000007827">
    <property type="expression patterns" value="Expressed in heart and 19 other cell types or tissues"/>
</dbReference>
<dbReference type="GO" id="GO:0005743">
    <property type="term" value="C:mitochondrial inner membrane"/>
    <property type="evidence" value="ECO:0007669"/>
    <property type="project" value="UniProtKB-SubCell"/>
</dbReference>
<dbReference type="GO" id="GO:0031966">
    <property type="term" value="C:mitochondrial membrane"/>
    <property type="evidence" value="ECO:0000266"/>
    <property type="project" value="RGD"/>
</dbReference>
<dbReference type="GO" id="GO:0045277">
    <property type="term" value="C:respiratory chain complex IV"/>
    <property type="evidence" value="ECO:0000318"/>
    <property type="project" value="GO_Central"/>
</dbReference>
<dbReference type="GO" id="GO:0071456">
    <property type="term" value="P:cellular response to hypoxia"/>
    <property type="evidence" value="ECO:0000270"/>
    <property type="project" value="RGD"/>
</dbReference>
<dbReference type="GO" id="GO:0006123">
    <property type="term" value="P:mitochondrial electron transport, cytochrome c to oxygen"/>
    <property type="evidence" value="ECO:0000266"/>
    <property type="project" value="RGD"/>
</dbReference>
<dbReference type="CDD" id="cd00922">
    <property type="entry name" value="Cyt_c_Oxidase_IV"/>
    <property type="match status" value="1"/>
</dbReference>
<dbReference type="FunFam" id="1.10.442.10:FF:000001">
    <property type="entry name" value="Cytochrome c oxidase subunit 4 isoform 1"/>
    <property type="match status" value="1"/>
</dbReference>
<dbReference type="Gene3D" id="1.10.442.10">
    <property type="entry name" value="Cytochrome c oxidase subunit IV"/>
    <property type="match status" value="1"/>
</dbReference>
<dbReference type="InterPro" id="IPR013288">
    <property type="entry name" value="Cyt_c_oxidase_su4"/>
</dbReference>
<dbReference type="InterPro" id="IPR004203">
    <property type="entry name" value="Cyt_c_oxidase_su4_fam"/>
</dbReference>
<dbReference type="InterPro" id="IPR036639">
    <property type="entry name" value="Cyt_c_oxidase_su4_sf"/>
</dbReference>
<dbReference type="PANTHER" id="PTHR10707:SF11">
    <property type="entry name" value="CYTOCHROME C OXIDASE SUBUNIT 4 ISOFORM 2, MITOCHONDRIAL"/>
    <property type="match status" value="1"/>
</dbReference>
<dbReference type="PANTHER" id="PTHR10707">
    <property type="entry name" value="CYTOCHROME C OXIDASE SUBUNIT IV"/>
    <property type="match status" value="1"/>
</dbReference>
<dbReference type="Pfam" id="PF02936">
    <property type="entry name" value="COX4"/>
    <property type="match status" value="1"/>
</dbReference>
<dbReference type="PRINTS" id="PR01873">
    <property type="entry name" value="CYTCOXIDASE4"/>
</dbReference>
<dbReference type="SUPFAM" id="SSF81406">
    <property type="entry name" value="Mitochondrial cytochrome c oxidase subunit IV"/>
    <property type="match status" value="1"/>
</dbReference>
<feature type="transit peptide" description="Mitochondrion" evidence="3">
    <location>
        <begin position="1"/>
        <end position="18"/>
    </location>
</feature>
<feature type="chain" id="PRO_0000006091" description="Cytochrome c oxidase subunit 4 isoform 2, mitochondrial">
    <location>
        <begin position="19"/>
        <end position="172"/>
    </location>
</feature>
<feature type="topological domain" description="Mitochondrial matrix" evidence="1">
    <location>
        <begin position="19"/>
        <end position="101"/>
    </location>
</feature>
<feature type="transmembrane region" description="Helical" evidence="1">
    <location>
        <begin position="102"/>
        <end position="127"/>
    </location>
</feature>
<feature type="topological domain" description="Mitochondrial intermembrane" evidence="1">
    <location>
        <begin position="128"/>
        <end position="172"/>
    </location>
</feature>
<feature type="region of interest" description="Disordered" evidence="4">
    <location>
        <begin position="1"/>
        <end position="33"/>
    </location>
</feature>
<feature type="compositionally biased region" description="Polar residues" evidence="4">
    <location>
        <begin position="16"/>
        <end position="33"/>
    </location>
</feature>
<reference key="1">
    <citation type="journal article" date="2001" name="Gene">
        <title>Mammalian subunit IV isoforms of cytochrome c oxidase.</title>
        <authorList>
            <person name="Huettemann M."/>
            <person name="Kadenbach B."/>
            <person name="Grossman L.I."/>
        </authorList>
    </citation>
    <scope>NUCLEOTIDE SEQUENCE [MRNA]</scope>
</reference>
<sequence>MFSRATRSLVMKTGGLRTQGTHSPGSAASSSQRRMTPYVDCYAQRSYPMPDEPYCTELSEEQRALKEKEKGSWAQLSQAEKVALYRLQFHETFAEMNHRSNEWKTVMGCVFFFIGFTALVIWWQRVYVFPKKVVTLTEERKAQQLQRLLDMKSNPIQGLSAHWDYEKKEWKK</sequence>
<organism>
    <name type="scientific">Rattus norvegicus</name>
    <name type="common">Rat</name>
    <dbReference type="NCBI Taxonomy" id="10116"/>
    <lineage>
        <taxon>Eukaryota</taxon>
        <taxon>Metazoa</taxon>
        <taxon>Chordata</taxon>
        <taxon>Craniata</taxon>
        <taxon>Vertebrata</taxon>
        <taxon>Euteleostomi</taxon>
        <taxon>Mammalia</taxon>
        <taxon>Eutheria</taxon>
        <taxon>Euarchontoglires</taxon>
        <taxon>Glires</taxon>
        <taxon>Rodentia</taxon>
        <taxon>Myomorpha</taxon>
        <taxon>Muroidea</taxon>
        <taxon>Muridae</taxon>
        <taxon>Murinae</taxon>
        <taxon>Rattus</taxon>
    </lineage>
</organism>
<evidence type="ECO:0000250" key="1">
    <source>
        <dbReference type="UniProtKB" id="P00423"/>
    </source>
</evidence>
<evidence type="ECO:0000250" key="2">
    <source>
        <dbReference type="UniProtKB" id="P00424"/>
    </source>
</evidence>
<evidence type="ECO:0000255" key="3"/>
<evidence type="ECO:0000256" key="4">
    <source>
        <dbReference type="SAM" id="MobiDB-lite"/>
    </source>
</evidence>
<evidence type="ECO:0000305" key="5"/>